<feature type="chain" id="PRO_0000134281" description="Small ribosomal subunit protein uS2">
    <location>
        <begin position="1"/>
        <end position="266"/>
    </location>
</feature>
<feature type="region of interest" description="Disordered" evidence="2">
    <location>
        <begin position="233"/>
        <end position="266"/>
    </location>
</feature>
<feature type="compositionally biased region" description="Basic residues" evidence="2">
    <location>
        <begin position="248"/>
        <end position="258"/>
    </location>
</feature>
<gene>
    <name evidence="1" type="primary">rpsB</name>
    <name type="ordered locus">PD_1960</name>
</gene>
<dbReference type="EMBL" id="AE009442">
    <property type="protein sequence ID" value="AAO29790.1"/>
    <property type="molecule type" value="Genomic_DNA"/>
</dbReference>
<dbReference type="RefSeq" id="WP_004090321.1">
    <property type="nucleotide sequence ID" value="NC_004556.1"/>
</dbReference>
<dbReference type="SMR" id="P66547"/>
<dbReference type="GeneID" id="93905822"/>
<dbReference type="KEGG" id="xft:PD_1960"/>
<dbReference type="HOGENOM" id="CLU_040318_1_2_6"/>
<dbReference type="Proteomes" id="UP000002516">
    <property type="component" value="Chromosome"/>
</dbReference>
<dbReference type="GO" id="GO:0022627">
    <property type="term" value="C:cytosolic small ribosomal subunit"/>
    <property type="evidence" value="ECO:0007669"/>
    <property type="project" value="TreeGrafter"/>
</dbReference>
<dbReference type="GO" id="GO:0003735">
    <property type="term" value="F:structural constituent of ribosome"/>
    <property type="evidence" value="ECO:0007669"/>
    <property type="project" value="InterPro"/>
</dbReference>
<dbReference type="GO" id="GO:0006412">
    <property type="term" value="P:translation"/>
    <property type="evidence" value="ECO:0007669"/>
    <property type="project" value="UniProtKB-UniRule"/>
</dbReference>
<dbReference type="CDD" id="cd01425">
    <property type="entry name" value="RPS2"/>
    <property type="match status" value="1"/>
</dbReference>
<dbReference type="FunFam" id="1.10.287.610:FF:000001">
    <property type="entry name" value="30S ribosomal protein S2"/>
    <property type="match status" value="1"/>
</dbReference>
<dbReference type="Gene3D" id="3.40.50.10490">
    <property type="entry name" value="Glucose-6-phosphate isomerase like protein, domain 1"/>
    <property type="match status" value="1"/>
</dbReference>
<dbReference type="Gene3D" id="1.10.287.610">
    <property type="entry name" value="Helix hairpin bin"/>
    <property type="match status" value="1"/>
</dbReference>
<dbReference type="HAMAP" id="MF_00291_B">
    <property type="entry name" value="Ribosomal_uS2_B"/>
    <property type="match status" value="1"/>
</dbReference>
<dbReference type="InterPro" id="IPR001865">
    <property type="entry name" value="Ribosomal_uS2"/>
</dbReference>
<dbReference type="InterPro" id="IPR005706">
    <property type="entry name" value="Ribosomal_uS2_bac/mit/plastid"/>
</dbReference>
<dbReference type="InterPro" id="IPR018130">
    <property type="entry name" value="Ribosomal_uS2_CS"/>
</dbReference>
<dbReference type="InterPro" id="IPR023591">
    <property type="entry name" value="Ribosomal_uS2_flav_dom_sf"/>
</dbReference>
<dbReference type="NCBIfam" id="TIGR01011">
    <property type="entry name" value="rpsB_bact"/>
    <property type="match status" value="1"/>
</dbReference>
<dbReference type="PANTHER" id="PTHR12534">
    <property type="entry name" value="30S RIBOSOMAL PROTEIN S2 PROKARYOTIC AND ORGANELLAR"/>
    <property type="match status" value="1"/>
</dbReference>
<dbReference type="PANTHER" id="PTHR12534:SF0">
    <property type="entry name" value="SMALL RIBOSOMAL SUBUNIT PROTEIN US2M"/>
    <property type="match status" value="1"/>
</dbReference>
<dbReference type="Pfam" id="PF00318">
    <property type="entry name" value="Ribosomal_S2"/>
    <property type="match status" value="1"/>
</dbReference>
<dbReference type="PRINTS" id="PR00395">
    <property type="entry name" value="RIBOSOMALS2"/>
</dbReference>
<dbReference type="SUPFAM" id="SSF52313">
    <property type="entry name" value="Ribosomal protein S2"/>
    <property type="match status" value="1"/>
</dbReference>
<dbReference type="PROSITE" id="PS00962">
    <property type="entry name" value="RIBOSOMAL_S2_1"/>
    <property type="match status" value="1"/>
</dbReference>
<dbReference type="PROSITE" id="PS00963">
    <property type="entry name" value="RIBOSOMAL_S2_2"/>
    <property type="match status" value="1"/>
</dbReference>
<proteinExistence type="inferred from homology"/>
<keyword id="KW-1185">Reference proteome</keyword>
<keyword id="KW-0687">Ribonucleoprotein</keyword>
<keyword id="KW-0689">Ribosomal protein</keyword>
<sequence length="266" mass="29201">MPQVTMRQMLEAGVHFGHQTRYRHPKMSPNIFGARGKIHIINLEKTVPLFNDAMNFLSAVAQKRGSVLFVGTKRSARDAIKEEAERCGMPYMIQRWLGGTLTNFRTVKQSVARLKELELAETDGTFSKLVKHEVLRLRRESGKLQASLGGIKDMNRIPDAIFVIDIGHEDIAIKEAKKLGIPVVAVVDTNYDPSLVDYPIPGNDDAIRAVQLYARAAADAVLEGKAAMPNAAAVREEEFASAPDAGKKGRQAQPKKGKRASDAAAE</sequence>
<protein>
    <recommendedName>
        <fullName evidence="1">Small ribosomal subunit protein uS2</fullName>
    </recommendedName>
    <alternativeName>
        <fullName evidence="3">30S ribosomal protein S2</fullName>
    </alternativeName>
</protein>
<reference key="1">
    <citation type="journal article" date="2003" name="J. Bacteriol.">
        <title>Comparative analyses of the complete genome sequences of Pierce's disease and citrus variegated chlorosis strains of Xylella fastidiosa.</title>
        <authorList>
            <person name="Van Sluys M.A."/>
            <person name="de Oliveira M.C."/>
            <person name="Monteiro-Vitorello C.B."/>
            <person name="Miyaki C.Y."/>
            <person name="Furlan L.R."/>
            <person name="Camargo L.E.A."/>
            <person name="da Silva A.C.R."/>
            <person name="Moon D.H."/>
            <person name="Takita M.A."/>
            <person name="Lemos E.G.M."/>
            <person name="Machado M.A."/>
            <person name="Ferro M.I.T."/>
            <person name="da Silva F.R."/>
            <person name="Goldman M.H.S."/>
            <person name="Goldman G.H."/>
            <person name="Lemos M.V.F."/>
            <person name="El-Dorry H."/>
            <person name="Tsai S.M."/>
            <person name="Carrer H."/>
            <person name="Carraro D.M."/>
            <person name="de Oliveira R.C."/>
            <person name="Nunes L.R."/>
            <person name="Siqueira W.J."/>
            <person name="Coutinho L.L."/>
            <person name="Kimura E.T."/>
            <person name="Ferro E.S."/>
            <person name="Harakava R."/>
            <person name="Kuramae E.E."/>
            <person name="Marino C.L."/>
            <person name="Giglioti E."/>
            <person name="Abreu I.L."/>
            <person name="Alves L.M.C."/>
            <person name="do Amaral A.M."/>
            <person name="Baia G.S."/>
            <person name="Blanco S.R."/>
            <person name="Brito M.S."/>
            <person name="Cannavan F.S."/>
            <person name="Celestino A.V."/>
            <person name="da Cunha A.F."/>
            <person name="Fenille R.C."/>
            <person name="Ferro J.A."/>
            <person name="Formighieri E.F."/>
            <person name="Kishi L.T."/>
            <person name="Leoni S.G."/>
            <person name="Oliveira A.R."/>
            <person name="Rosa V.E. Jr."/>
            <person name="Sassaki F.T."/>
            <person name="Sena J.A.D."/>
            <person name="de Souza A.A."/>
            <person name="Truffi D."/>
            <person name="Tsukumo F."/>
            <person name="Yanai G.M."/>
            <person name="Zaros L.G."/>
            <person name="Civerolo E.L."/>
            <person name="Simpson A.J.G."/>
            <person name="Almeida N.F. Jr."/>
            <person name="Setubal J.C."/>
            <person name="Kitajima J.P."/>
        </authorList>
    </citation>
    <scope>NUCLEOTIDE SEQUENCE [LARGE SCALE GENOMIC DNA]</scope>
    <source>
        <strain>Temecula1 / ATCC 700964</strain>
    </source>
</reference>
<evidence type="ECO:0000255" key="1">
    <source>
        <dbReference type="HAMAP-Rule" id="MF_00291"/>
    </source>
</evidence>
<evidence type="ECO:0000256" key="2">
    <source>
        <dbReference type="SAM" id="MobiDB-lite"/>
    </source>
</evidence>
<evidence type="ECO:0000305" key="3"/>
<name>RS2_XYLFT</name>
<organism>
    <name type="scientific">Xylella fastidiosa (strain Temecula1 / ATCC 700964)</name>
    <dbReference type="NCBI Taxonomy" id="183190"/>
    <lineage>
        <taxon>Bacteria</taxon>
        <taxon>Pseudomonadati</taxon>
        <taxon>Pseudomonadota</taxon>
        <taxon>Gammaproteobacteria</taxon>
        <taxon>Lysobacterales</taxon>
        <taxon>Lysobacteraceae</taxon>
        <taxon>Xylella</taxon>
    </lineage>
</organism>
<accession>P66547</accession>
<accession>Q9PAD8</accession>
<comment type="similarity">
    <text evidence="1">Belongs to the universal ribosomal protein uS2 family.</text>
</comment>